<sequence length="650" mass="72371">MSSQSLYKVSGNIAANALVNNDQYKKMYQESIVNPEGFWREHGKRIDWIKPYTKIKKTSFDDHNLSINWFYDGTLNASANCLDRHLAEHSDRVAIIWEGDNASEQRKITYGELHTQVCKFANALRSQGVRRGDIVTIYMPMVPEAAVAMLACARIGAVHSVVFGGFSPDSIASRVIDGKSKVVITADEGMRGGRAIPLKRNIDDALKHPDVTSVEKVIVLKRTGGKVDWIEGRDVWWHSLVETASEHCAVEEMGAEDPLFLLYTSGSTGNPKGVLHTTGGYMVYASMTHEYVFDYKPGEIYWCTADVGWITGHSYMVYGPLANGATVLIHEGIPNHPSPARLGEMIDRHKVNILYTAPTLIRALMAEGKQHFDKYDGSSLRIMGSVGEPINPEAWRWYHEVIGHEHCPIVDTWWQTETGGILITPLPGATDTKPGSATRPFFGVQPALVDNMGNILEGATEGNLVLLDSWPGQMRTVYGDHERFVLTYFKTFRGMYFTGDGARRDEDGYYWITGRVDDVINVSGHRLGTAEVESALVSHELVAEAAVVGYPHDIKGQGIYAYVTLTRGTEESEELRQELRQWVRKEIGALATPDLIQWATGLPKTRSGKIMRRFLRKIAANEVTNLGDASTLADPAVIETLIETRLNRNE</sequence>
<dbReference type="EC" id="6.2.1.1" evidence="1"/>
<dbReference type="EMBL" id="CP000446">
    <property type="protein sequence ID" value="ABI39433.1"/>
    <property type="molecule type" value="Genomic_DNA"/>
</dbReference>
<dbReference type="RefSeq" id="WP_011623123.1">
    <property type="nucleotide sequence ID" value="NC_008321.1"/>
</dbReference>
<dbReference type="SMR" id="Q0HHN4"/>
<dbReference type="KEGG" id="she:Shewmr4_2362"/>
<dbReference type="HOGENOM" id="CLU_000022_3_6_6"/>
<dbReference type="GO" id="GO:0005829">
    <property type="term" value="C:cytosol"/>
    <property type="evidence" value="ECO:0007669"/>
    <property type="project" value="TreeGrafter"/>
</dbReference>
<dbReference type="GO" id="GO:0003987">
    <property type="term" value="F:acetate-CoA ligase activity"/>
    <property type="evidence" value="ECO:0007669"/>
    <property type="project" value="UniProtKB-UniRule"/>
</dbReference>
<dbReference type="GO" id="GO:0016208">
    <property type="term" value="F:AMP binding"/>
    <property type="evidence" value="ECO:0007669"/>
    <property type="project" value="InterPro"/>
</dbReference>
<dbReference type="GO" id="GO:0005524">
    <property type="term" value="F:ATP binding"/>
    <property type="evidence" value="ECO:0007669"/>
    <property type="project" value="UniProtKB-KW"/>
</dbReference>
<dbReference type="GO" id="GO:0046872">
    <property type="term" value="F:metal ion binding"/>
    <property type="evidence" value="ECO:0007669"/>
    <property type="project" value="UniProtKB-KW"/>
</dbReference>
<dbReference type="GO" id="GO:0019427">
    <property type="term" value="P:acetyl-CoA biosynthetic process from acetate"/>
    <property type="evidence" value="ECO:0007669"/>
    <property type="project" value="InterPro"/>
</dbReference>
<dbReference type="CDD" id="cd05966">
    <property type="entry name" value="ACS"/>
    <property type="match status" value="1"/>
</dbReference>
<dbReference type="FunFam" id="3.30.300.30:FF:000004">
    <property type="entry name" value="Acetyl-coenzyme A synthetase"/>
    <property type="match status" value="1"/>
</dbReference>
<dbReference type="FunFam" id="3.40.50.12780:FF:000001">
    <property type="entry name" value="Acetyl-coenzyme A synthetase"/>
    <property type="match status" value="1"/>
</dbReference>
<dbReference type="Gene3D" id="3.30.300.30">
    <property type="match status" value="1"/>
</dbReference>
<dbReference type="Gene3D" id="3.40.50.12780">
    <property type="entry name" value="N-terminal domain of ligase-like"/>
    <property type="match status" value="1"/>
</dbReference>
<dbReference type="HAMAP" id="MF_01123">
    <property type="entry name" value="Ac_CoA_synth"/>
    <property type="match status" value="1"/>
</dbReference>
<dbReference type="InterPro" id="IPR011904">
    <property type="entry name" value="Ac_CoA_lig"/>
</dbReference>
<dbReference type="InterPro" id="IPR032387">
    <property type="entry name" value="ACAS_N"/>
</dbReference>
<dbReference type="InterPro" id="IPR025110">
    <property type="entry name" value="AMP-bd_C"/>
</dbReference>
<dbReference type="InterPro" id="IPR045851">
    <property type="entry name" value="AMP-bd_C_sf"/>
</dbReference>
<dbReference type="InterPro" id="IPR020845">
    <property type="entry name" value="AMP-binding_CS"/>
</dbReference>
<dbReference type="InterPro" id="IPR000873">
    <property type="entry name" value="AMP-dep_synth/lig_dom"/>
</dbReference>
<dbReference type="InterPro" id="IPR042099">
    <property type="entry name" value="ANL_N_sf"/>
</dbReference>
<dbReference type="NCBIfam" id="TIGR02188">
    <property type="entry name" value="Ac_CoA_lig_AcsA"/>
    <property type="match status" value="1"/>
</dbReference>
<dbReference type="NCBIfam" id="NF001208">
    <property type="entry name" value="PRK00174.1"/>
    <property type="match status" value="1"/>
</dbReference>
<dbReference type="PANTHER" id="PTHR24095">
    <property type="entry name" value="ACETYL-COENZYME A SYNTHETASE"/>
    <property type="match status" value="1"/>
</dbReference>
<dbReference type="PANTHER" id="PTHR24095:SF243">
    <property type="entry name" value="ACETYL-COENZYME A SYNTHETASE"/>
    <property type="match status" value="1"/>
</dbReference>
<dbReference type="Pfam" id="PF16177">
    <property type="entry name" value="ACAS_N"/>
    <property type="match status" value="1"/>
</dbReference>
<dbReference type="Pfam" id="PF00501">
    <property type="entry name" value="AMP-binding"/>
    <property type="match status" value="1"/>
</dbReference>
<dbReference type="Pfam" id="PF13193">
    <property type="entry name" value="AMP-binding_C"/>
    <property type="match status" value="1"/>
</dbReference>
<dbReference type="SUPFAM" id="SSF56801">
    <property type="entry name" value="Acetyl-CoA synthetase-like"/>
    <property type="match status" value="1"/>
</dbReference>
<dbReference type="PROSITE" id="PS00455">
    <property type="entry name" value="AMP_BINDING"/>
    <property type="match status" value="1"/>
</dbReference>
<name>ACSA_SHESM</name>
<evidence type="ECO:0000255" key="1">
    <source>
        <dbReference type="HAMAP-Rule" id="MF_01123"/>
    </source>
</evidence>
<feature type="chain" id="PRO_1000065323" description="Acetyl-coenzyme A synthetase">
    <location>
        <begin position="1"/>
        <end position="650"/>
    </location>
</feature>
<feature type="binding site" evidence="1">
    <location>
        <begin position="191"/>
        <end position="194"/>
    </location>
    <ligand>
        <name>CoA</name>
        <dbReference type="ChEBI" id="CHEBI:57287"/>
    </ligand>
</feature>
<feature type="binding site" evidence="1">
    <location>
        <position position="311"/>
    </location>
    <ligand>
        <name>CoA</name>
        <dbReference type="ChEBI" id="CHEBI:57287"/>
    </ligand>
</feature>
<feature type="binding site" evidence="1">
    <location>
        <position position="335"/>
    </location>
    <ligand>
        <name>CoA</name>
        <dbReference type="ChEBI" id="CHEBI:57287"/>
    </ligand>
</feature>
<feature type="binding site" evidence="1">
    <location>
        <begin position="387"/>
        <end position="389"/>
    </location>
    <ligand>
        <name>ATP</name>
        <dbReference type="ChEBI" id="CHEBI:30616"/>
    </ligand>
</feature>
<feature type="binding site" evidence="1">
    <location>
        <begin position="411"/>
        <end position="416"/>
    </location>
    <ligand>
        <name>ATP</name>
        <dbReference type="ChEBI" id="CHEBI:30616"/>
    </ligand>
</feature>
<feature type="binding site" evidence="1">
    <location>
        <position position="500"/>
    </location>
    <ligand>
        <name>ATP</name>
        <dbReference type="ChEBI" id="CHEBI:30616"/>
    </ligand>
</feature>
<feature type="binding site" evidence="1">
    <location>
        <position position="515"/>
    </location>
    <ligand>
        <name>ATP</name>
        <dbReference type="ChEBI" id="CHEBI:30616"/>
    </ligand>
</feature>
<feature type="binding site" evidence="1">
    <location>
        <position position="523"/>
    </location>
    <ligand>
        <name>CoA</name>
        <dbReference type="ChEBI" id="CHEBI:57287"/>
    </ligand>
</feature>
<feature type="binding site" evidence="1">
    <location>
        <position position="526"/>
    </location>
    <ligand>
        <name>ATP</name>
        <dbReference type="ChEBI" id="CHEBI:30616"/>
    </ligand>
</feature>
<feature type="binding site" evidence="1">
    <location>
        <position position="537"/>
    </location>
    <ligand>
        <name>Mg(2+)</name>
        <dbReference type="ChEBI" id="CHEBI:18420"/>
    </ligand>
</feature>
<feature type="binding site" evidence="1">
    <location>
        <position position="539"/>
    </location>
    <ligand>
        <name>Mg(2+)</name>
        <dbReference type="ChEBI" id="CHEBI:18420"/>
    </ligand>
</feature>
<feature type="binding site" evidence="1">
    <location>
        <position position="542"/>
    </location>
    <ligand>
        <name>Mg(2+)</name>
        <dbReference type="ChEBI" id="CHEBI:18420"/>
    </ligand>
</feature>
<feature type="binding site" evidence="1">
    <location>
        <position position="584"/>
    </location>
    <ligand>
        <name>CoA</name>
        <dbReference type="ChEBI" id="CHEBI:57287"/>
    </ligand>
</feature>
<feature type="modified residue" description="N6-acetyllysine" evidence="1">
    <location>
        <position position="609"/>
    </location>
</feature>
<reference key="1">
    <citation type="submission" date="2006-08" db="EMBL/GenBank/DDBJ databases">
        <title>Complete sequence of Shewanella sp. MR-4.</title>
        <authorList>
            <consortium name="US DOE Joint Genome Institute"/>
            <person name="Copeland A."/>
            <person name="Lucas S."/>
            <person name="Lapidus A."/>
            <person name="Barry K."/>
            <person name="Detter J.C."/>
            <person name="Glavina del Rio T."/>
            <person name="Hammon N."/>
            <person name="Israni S."/>
            <person name="Dalin E."/>
            <person name="Tice H."/>
            <person name="Pitluck S."/>
            <person name="Kiss H."/>
            <person name="Brettin T."/>
            <person name="Bruce D."/>
            <person name="Han C."/>
            <person name="Tapia R."/>
            <person name="Gilna P."/>
            <person name="Schmutz J."/>
            <person name="Larimer F."/>
            <person name="Land M."/>
            <person name="Hauser L."/>
            <person name="Kyrpides N."/>
            <person name="Mikhailova N."/>
            <person name="Nealson K."/>
            <person name="Konstantinidis K."/>
            <person name="Klappenbach J."/>
            <person name="Tiedje J."/>
            <person name="Richardson P."/>
        </authorList>
    </citation>
    <scope>NUCLEOTIDE SEQUENCE [LARGE SCALE GENOMIC DNA]</scope>
    <source>
        <strain>MR-4</strain>
    </source>
</reference>
<comment type="function">
    <text evidence="1">Catalyzes the conversion of acetate into acetyl-CoA (AcCoA), an essential intermediate at the junction of anabolic and catabolic pathways. AcsA undergoes a two-step reaction. In the first half reaction, AcsA combines acetate with ATP to form acetyl-adenylate (AcAMP) intermediate. In the second half reaction, it can then transfer the acetyl group from AcAMP to the sulfhydryl group of CoA, forming the product AcCoA.</text>
</comment>
<comment type="catalytic activity">
    <reaction evidence="1">
        <text>acetate + ATP + CoA = acetyl-CoA + AMP + diphosphate</text>
        <dbReference type="Rhea" id="RHEA:23176"/>
        <dbReference type="ChEBI" id="CHEBI:30089"/>
        <dbReference type="ChEBI" id="CHEBI:30616"/>
        <dbReference type="ChEBI" id="CHEBI:33019"/>
        <dbReference type="ChEBI" id="CHEBI:57287"/>
        <dbReference type="ChEBI" id="CHEBI:57288"/>
        <dbReference type="ChEBI" id="CHEBI:456215"/>
        <dbReference type="EC" id="6.2.1.1"/>
    </reaction>
</comment>
<comment type="cofactor">
    <cofactor evidence="1">
        <name>Mg(2+)</name>
        <dbReference type="ChEBI" id="CHEBI:18420"/>
    </cofactor>
</comment>
<comment type="PTM">
    <text evidence="1">Acetylated. Deacetylation by the SIR2-homolog deacetylase activates the enzyme.</text>
</comment>
<comment type="similarity">
    <text evidence="1">Belongs to the ATP-dependent AMP-binding enzyme family.</text>
</comment>
<gene>
    <name evidence="1" type="primary">acsA</name>
    <name type="ordered locus">Shewmr4_2362</name>
</gene>
<organism>
    <name type="scientific">Shewanella sp. (strain MR-4)</name>
    <dbReference type="NCBI Taxonomy" id="60480"/>
    <lineage>
        <taxon>Bacteria</taxon>
        <taxon>Pseudomonadati</taxon>
        <taxon>Pseudomonadota</taxon>
        <taxon>Gammaproteobacteria</taxon>
        <taxon>Alteromonadales</taxon>
        <taxon>Shewanellaceae</taxon>
        <taxon>Shewanella</taxon>
    </lineage>
</organism>
<proteinExistence type="inferred from homology"/>
<keyword id="KW-0007">Acetylation</keyword>
<keyword id="KW-0067">ATP-binding</keyword>
<keyword id="KW-0436">Ligase</keyword>
<keyword id="KW-0460">Magnesium</keyword>
<keyword id="KW-0479">Metal-binding</keyword>
<keyword id="KW-0547">Nucleotide-binding</keyword>
<accession>Q0HHN4</accession>
<protein>
    <recommendedName>
        <fullName evidence="1">Acetyl-coenzyme A synthetase</fullName>
        <shortName evidence="1">AcCoA synthetase</shortName>
        <shortName evidence="1">Acs</shortName>
        <ecNumber evidence="1">6.2.1.1</ecNumber>
    </recommendedName>
    <alternativeName>
        <fullName evidence="1">Acetate--CoA ligase</fullName>
    </alternativeName>
    <alternativeName>
        <fullName evidence="1">Acyl-activating enzyme</fullName>
    </alternativeName>
</protein>